<keyword id="KW-1185">Reference proteome</keyword>
<keyword id="KW-0687">Ribonucleoprotein</keyword>
<keyword id="KW-0689">Ribosomal protein</keyword>
<gene>
    <name evidence="1" type="primary">rpl30</name>
    <name type="ordered locus">APE_0345.1</name>
</gene>
<comment type="subunit">
    <text evidence="1">Part of the 50S ribosomal subunit.</text>
</comment>
<comment type="similarity">
    <text evidence="1">Belongs to the universal ribosomal protein uL30 family.</text>
</comment>
<sequence>MPLYAVIRIRGTVDVPPDIDKTLYLLRLRRRYTASIYHDSLPGLRDMLRTVEAWTTYGEIEERVLEELLRKRGRIVGDKPLTDKWVEENLGLSGLGELAEKLVSGELHYHRLEEKGVKPFFRLHPPRGGFKKSIKRMFRDGGELGYRGSAINELILKML</sequence>
<reference key="1">
    <citation type="journal article" date="1999" name="DNA Res.">
        <title>Complete genome sequence of an aerobic hyper-thermophilic crenarchaeon, Aeropyrum pernix K1.</title>
        <authorList>
            <person name="Kawarabayasi Y."/>
            <person name="Hino Y."/>
            <person name="Horikawa H."/>
            <person name="Yamazaki S."/>
            <person name="Haikawa Y."/>
            <person name="Jin-no K."/>
            <person name="Takahashi M."/>
            <person name="Sekine M."/>
            <person name="Baba S."/>
            <person name="Ankai A."/>
            <person name="Kosugi H."/>
            <person name="Hosoyama A."/>
            <person name="Fukui S."/>
            <person name="Nagai Y."/>
            <person name="Nishijima K."/>
            <person name="Nakazawa H."/>
            <person name="Takamiya M."/>
            <person name="Masuda S."/>
            <person name="Funahashi T."/>
            <person name="Tanaka T."/>
            <person name="Kudoh Y."/>
            <person name="Yamazaki J."/>
            <person name="Kushida N."/>
            <person name="Oguchi A."/>
            <person name="Aoki K."/>
            <person name="Kubota K."/>
            <person name="Nakamura Y."/>
            <person name="Nomura N."/>
            <person name="Sako Y."/>
            <person name="Kikuchi H."/>
        </authorList>
    </citation>
    <scope>NUCLEOTIDE SEQUENCE [LARGE SCALE GENOMIC DNA]</scope>
    <source>
        <strain>ATCC 700893 / DSM 11879 / JCM 9820 / NBRC 100138 / K1</strain>
    </source>
</reference>
<dbReference type="EMBL" id="BA000002">
    <property type="protein sequence ID" value="BAA79300.2"/>
    <property type="molecule type" value="Genomic_DNA"/>
</dbReference>
<dbReference type="PIR" id="H72725">
    <property type="entry name" value="H72725"/>
</dbReference>
<dbReference type="RefSeq" id="WP_010865679.1">
    <property type="nucleotide sequence ID" value="NC_000854.2"/>
</dbReference>
<dbReference type="SMR" id="Q9YF96"/>
<dbReference type="STRING" id="272557.APE_0345.1"/>
<dbReference type="EnsemblBacteria" id="BAA79300">
    <property type="protein sequence ID" value="BAA79300"/>
    <property type="gene ID" value="APE_0345.1"/>
</dbReference>
<dbReference type="GeneID" id="1444563"/>
<dbReference type="KEGG" id="ape:APE_0345.1"/>
<dbReference type="PATRIC" id="fig|272557.25.peg.265"/>
<dbReference type="eggNOG" id="arCOG04086">
    <property type="taxonomic scope" value="Archaea"/>
</dbReference>
<dbReference type="Proteomes" id="UP000002518">
    <property type="component" value="Chromosome"/>
</dbReference>
<dbReference type="GO" id="GO:0022625">
    <property type="term" value="C:cytosolic large ribosomal subunit"/>
    <property type="evidence" value="ECO:0007669"/>
    <property type="project" value="TreeGrafter"/>
</dbReference>
<dbReference type="GO" id="GO:0003723">
    <property type="term" value="F:RNA binding"/>
    <property type="evidence" value="ECO:0007669"/>
    <property type="project" value="TreeGrafter"/>
</dbReference>
<dbReference type="GO" id="GO:0003735">
    <property type="term" value="F:structural constituent of ribosome"/>
    <property type="evidence" value="ECO:0007669"/>
    <property type="project" value="InterPro"/>
</dbReference>
<dbReference type="GO" id="GO:0000463">
    <property type="term" value="P:maturation of LSU-rRNA from tricistronic rRNA transcript (SSU-rRNA, 5.8S rRNA, LSU-rRNA)"/>
    <property type="evidence" value="ECO:0007669"/>
    <property type="project" value="TreeGrafter"/>
</dbReference>
<dbReference type="GO" id="GO:0006412">
    <property type="term" value="P:translation"/>
    <property type="evidence" value="ECO:0007669"/>
    <property type="project" value="UniProtKB-UniRule"/>
</dbReference>
<dbReference type="CDD" id="cd01657">
    <property type="entry name" value="Ribosomal_L7_archeal_euk"/>
    <property type="match status" value="1"/>
</dbReference>
<dbReference type="Gene3D" id="1.10.15.30">
    <property type="match status" value="1"/>
</dbReference>
<dbReference type="Gene3D" id="3.30.1390.20">
    <property type="entry name" value="Ribosomal protein L30, ferredoxin-like fold domain"/>
    <property type="match status" value="1"/>
</dbReference>
<dbReference type="HAMAP" id="MF_01371_A">
    <property type="entry name" value="Ribosomal_uL30_A"/>
    <property type="match status" value="1"/>
</dbReference>
<dbReference type="InterPro" id="IPR036919">
    <property type="entry name" value="Ribo_uL30_ferredoxin-like_sf"/>
</dbReference>
<dbReference type="InterPro" id="IPR039699">
    <property type="entry name" value="Ribosomal_uL30"/>
</dbReference>
<dbReference type="InterPro" id="IPR005997">
    <property type="entry name" value="Ribosomal_uL30_arc"/>
</dbReference>
<dbReference type="InterPro" id="IPR035808">
    <property type="entry name" value="Ribosomal_uL30_euk_arc"/>
</dbReference>
<dbReference type="InterPro" id="IPR016082">
    <property type="entry name" value="Ribosomal_uL30_ferredoxin-like"/>
</dbReference>
<dbReference type="NCBIfam" id="NF004711">
    <property type="entry name" value="PRK06049.1"/>
    <property type="match status" value="1"/>
</dbReference>
<dbReference type="NCBIfam" id="TIGR01309">
    <property type="entry name" value="uL30_arch"/>
    <property type="match status" value="1"/>
</dbReference>
<dbReference type="PANTHER" id="PTHR11524">
    <property type="entry name" value="60S RIBOSOMAL PROTEIN L7"/>
    <property type="match status" value="1"/>
</dbReference>
<dbReference type="PANTHER" id="PTHR11524:SF16">
    <property type="entry name" value="LARGE RIBOSOMAL SUBUNIT PROTEIN UL30"/>
    <property type="match status" value="1"/>
</dbReference>
<dbReference type="Pfam" id="PF00327">
    <property type="entry name" value="Ribosomal_L30"/>
    <property type="match status" value="1"/>
</dbReference>
<dbReference type="SUPFAM" id="SSF55129">
    <property type="entry name" value="Ribosomal protein L30p/L7e"/>
    <property type="match status" value="1"/>
</dbReference>
<accession>Q9YF96</accession>
<proteinExistence type="inferred from homology"/>
<protein>
    <recommendedName>
        <fullName evidence="1">Large ribosomal subunit protein uL30</fullName>
    </recommendedName>
    <alternativeName>
        <fullName evidence="2">50S ribosomal protein L30</fullName>
    </alternativeName>
</protein>
<feature type="chain" id="PRO_0000104620" description="Large ribosomal subunit protein uL30">
    <location>
        <begin position="1"/>
        <end position="159"/>
    </location>
</feature>
<name>RL30_AERPE</name>
<organism>
    <name type="scientific">Aeropyrum pernix (strain ATCC 700893 / DSM 11879 / JCM 9820 / NBRC 100138 / K1)</name>
    <dbReference type="NCBI Taxonomy" id="272557"/>
    <lineage>
        <taxon>Archaea</taxon>
        <taxon>Thermoproteota</taxon>
        <taxon>Thermoprotei</taxon>
        <taxon>Desulfurococcales</taxon>
        <taxon>Desulfurococcaceae</taxon>
        <taxon>Aeropyrum</taxon>
    </lineage>
</organism>
<evidence type="ECO:0000255" key="1">
    <source>
        <dbReference type="HAMAP-Rule" id="MF_01371"/>
    </source>
</evidence>
<evidence type="ECO:0000305" key="2"/>